<gene>
    <name evidence="1" type="primary">rplF</name>
    <name type="ordered locus">SSON_3446</name>
</gene>
<protein>
    <recommendedName>
        <fullName evidence="1">Large ribosomal subunit protein uL6</fullName>
    </recommendedName>
    <alternativeName>
        <fullName evidence="2">50S ribosomal protein L6</fullName>
    </alternativeName>
</protein>
<reference key="1">
    <citation type="journal article" date="2005" name="Nucleic Acids Res.">
        <title>Genome dynamics and diversity of Shigella species, the etiologic agents of bacillary dysentery.</title>
        <authorList>
            <person name="Yang F."/>
            <person name="Yang J."/>
            <person name="Zhang X."/>
            <person name="Chen L."/>
            <person name="Jiang Y."/>
            <person name="Yan Y."/>
            <person name="Tang X."/>
            <person name="Wang J."/>
            <person name="Xiong Z."/>
            <person name="Dong J."/>
            <person name="Xue Y."/>
            <person name="Zhu Y."/>
            <person name="Xu X."/>
            <person name="Sun L."/>
            <person name="Chen S."/>
            <person name="Nie H."/>
            <person name="Peng J."/>
            <person name="Xu J."/>
            <person name="Wang Y."/>
            <person name="Yuan Z."/>
            <person name="Wen Y."/>
            <person name="Yao Z."/>
            <person name="Shen Y."/>
            <person name="Qiang B."/>
            <person name="Hou Y."/>
            <person name="Yu J."/>
            <person name="Jin Q."/>
        </authorList>
    </citation>
    <scope>NUCLEOTIDE SEQUENCE [LARGE SCALE GENOMIC DNA]</scope>
    <source>
        <strain>Ss046</strain>
    </source>
</reference>
<sequence>MSRVAKAPVVVPAGVDVKINGQVITIKGKNGELTRTLNDAVEVKHADNTLTFGPRDGYADGWAQAGTARALLNSMVIGVTEGFTKKLQLVGVGYRAAVKGNVINLSLGFSHPVDHQLPAGITAECPTQTEIVLKGVDKQVIGQVAADLRAYRRPEPYKGKGVRYADEVVRTKEAKKK</sequence>
<proteinExistence type="inferred from homology"/>
<keyword id="KW-0007">Acetylation</keyword>
<keyword id="KW-1185">Reference proteome</keyword>
<keyword id="KW-0687">Ribonucleoprotein</keyword>
<keyword id="KW-0689">Ribosomal protein</keyword>
<keyword id="KW-0694">RNA-binding</keyword>
<keyword id="KW-0699">rRNA-binding</keyword>
<comment type="function">
    <text evidence="1">This protein binds to the 23S rRNA, and is important in its secondary structure. It is located near the subunit interface in the base of the L7/L12 stalk, and near the tRNA binding site of the peptidyltransferase center.</text>
</comment>
<comment type="subunit">
    <text evidence="1">Part of the 50S ribosomal subunit.</text>
</comment>
<comment type="similarity">
    <text evidence="1">Belongs to the universal ribosomal protein uL6 family.</text>
</comment>
<feature type="chain" id="PRO_0000265300" description="Large ribosomal subunit protein uL6">
    <location>
        <begin position="1"/>
        <end position="177"/>
    </location>
</feature>
<feature type="modified residue" description="N6-acetyllysine" evidence="1">
    <location>
        <position position="44"/>
    </location>
</feature>
<name>RL6_SHISS</name>
<accession>Q3YWV4</accession>
<organism>
    <name type="scientific">Shigella sonnei (strain Ss046)</name>
    <dbReference type="NCBI Taxonomy" id="300269"/>
    <lineage>
        <taxon>Bacteria</taxon>
        <taxon>Pseudomonadati</taxon>
        <taxon>Pseudomonadota</taxon>
        <taxon>Gammaproteobacteria</taxon>
        <taxon>Enterobacterales</taxon>
        <taxon>Enterobacteriaceae</taxon>
        <taxon>Shigella</taxon>
    </lineage>
</organism>
<dbReference type="EMBL" id="CP000038">
    <property type="protein sequence ID" value="AAZ90008.1"/>
    <property type="molecule type" value="Genomic_DNA"/>
</dbReference>
<dbReference type="RefSeq" id="WP_000091946.1">
    <property type="nucleotide sequence ID" value="NC_007384.1"/>
</dbReference>
<dbReference type="SMR" id="Q3YWV4"/>
<dbReference type="GeneID" id="93778682"/>
<dbReference type="KEGG" id="ssn:SSON_3446"/>
<dbReference type="HOGENOM" id="CLU_065464_1_2_6"/>
<dbReference type="Proteomes" id="UP000002529">
    <property type="component" value="Chromosome"/>
</dbReference>
<dbReference type="GO" id="GO:0022625">
    <property type="term" value="C:cytosolic large ribosomal subunit"/>
    <property type="evidence" value="ECO:0007669"/>
    <property type="project" value="TreeGrafter"/>
</dbReference>
<dbReference type="GO" id="GO:0019843">
    <property type="term" value="F:rRNA binding"/>
    <property type="evidence" value="ECO:0007669"/>
    <property type="project" value="UniProtKB-UniRule"/>
</dbReference>
<dbReference type="GO" id="GO:0003735">
    <property type="term" value="F:structural constituent of ribosome"/>
    <property type="evidence" value="ECO:0007669"/>
    <property type="project" value="InterPro"/>
</dbReference>
<dbReference type="GO" id="GO:0002181">
    <property type="term" value="P:cytoplasmic translation"/>
    <property type="evidence" value="ECO:0007669"/>
    <property type="project" value="TreeGrafter"/>
</dbReference>
<dbReference type="FunFam" id="3.90.930.12:FF:000001">
    <property type="entry name" value="50S ribosomal protein L6"/>
    <property type="match status" value="1"/>
</dbReference>
<dbReference type="FunFam" id="3.90.930.12:FF:000002">
    <property type="entry name" value="50S ribosomal protein L6"/>
    <property type="match status" value="1"/>
</dbReference>
<dbReference type="Gene3D" id="3.90.930.12">
    <property type="entry name" value="Ribosomal protein L6, alpha-beta domain"/>
    <property type="match status" value="2"/>
</dbReference>
<dbReference type="HAMAP" id="MF_01365_B">
    <property type="entry name" value="Ribosomal_uL6_B"/>
    <property type="match status" value="1"/>
</dbReference>
<dbReference type="InterPro" id="IPR000702">
    <property type="entry name" value="Ribosomal_uL6-like"/>
</dbReference>
<dbReference type="InterPro" id="IPR036789">
    <property type="entry name" value="Ribosomal_uL6-like_a/b-dom_sf"/>
</dbReference>
<dbReference type="InterPro" id="IPR020040">
    <property type="entry name" value="Ribosomal_uL6_a/b-dom"/>
</dbReference>
<dbReference type="InterPro" id="IPR019906">
    <property type="entry name" value="Ribosomal_uL6_bac-type"/>
</dbReference>
<dbReference type="InterPro" id="IPR002358">
    <property type="entry name" value="Ribosomal_uL6_CS"/>
</dbReference>
<dbReference type="NCBIfam" id="TIGR03654">
    <property type="entry name" value="L6_bact"/>
    <property type="match status" value="1"/>
</dbReference>
<dbReference type="PANTHER" id="PTHR11655">
    <property type="entry name" value="60S/50S RIBOSOMAL PROTEIN L6/L9"/>
    <property type="match status" value="1"/>
</dbReference>
<dbReference type="PANTHER" id="PTHR11655:SF14">
    <property type="entry name" value="LARGE RIBOSOMAL SUBUNIT PROTEIN UL6M"/>
    <property type="match status" value="1"/>
</dbReference>
<dbReference type="Pfam" id="PF00347">
    <property type="entry name" value="Ribosomal_L6"/>
    <property type="match status" value="2"/>
</dbReference>
<dbReference type="PIRSF" id="PIRSF002162">
    <property type="entry name" value="Ribosomal_L6"/>
    <property type="match status" value="1"/>
</dbReference>
<dbReference type="PRINTS" id="PR00059">
    <property type="entry name" value="RIBOSOMALL6"/>
</dbReference>
<dbReference type="SUPFAM" id="SSF56053">
    <property type="entry name" value="Ribosomal protein L6"/>
    <property type="match status" value="2"/>
</dbReference>
<dbReference type="PROSITE" id="PS00525">
    <property type="entry name" value="RIBOSOMAL_L6_1"/>
    <property type="match status" value="1"/>
</dbReference>
<evidence type="ECO:0000255" key="1">
    <source>
        <dbReference type="HAMAP-Rule" id="MF_01365"/>
    </source>
</evidence>
<evidence type="ECO:0000305" key="2"/>